<reference key="1">
    <citation type="submission" date="2006-05" db="EMBL/GenBank/DDBJ databases">
        <title>Complete sequence of chromosome 1 of Burkholderia cenocepacia AU 1054.</title>
        <authorList>
            <consortium name="US DOE Joint Genome Institute"/>
            <person name="Copeland A."/>
            <person name="Lucas S."/>
            <person name="Lapidus A."/>
            <person name="Barry K."/>
            <person name="Detter J.C."/>
            <person name="Glavina del Rio T."/>
            <person name="Hammon N."/>
            <person name="Israni S."/>
            <person name="Dalin E."/>
            <person name="Tice H."/>
            <person name="Pitluck S."/>
            <person name="Chain P."/>
            <person name="Malfatti S."/>
            <person name="Shin M."/>
            <person name="Vergez L."/>
            <person name="Schmutz J."/>
            <person name="Larimer F."/>
            <person name="Land M."/>
            <person name="Hauser L."/>
            <person name="Kyrpides N."/>
            <person name="Lykidis A."/>
            <person name="LiPuma J.J."/>
            <person name="Konstantinidis K."/>
            <person name="Tiedje J.M."/>
            <person name="Richardson P."/>
        </authorList>
    </citation>
    <scope>NUCLEOTIDE SEQUENCE [LARGE SCALE GENOMIC DNA]</scope>
    <source>
        <strain>AU 1054</strain>
    </source>
</reference>
<proteinExistence type="inferred from homology"/>
<evidence type="ECO:0000255" key="1">
    <source>
        <dbReference type="HAMAP-Rule" id="MF_01322"/>
    </source>
</evidence>
<evidence type="ECO:0000256" key="2">
    <source>
        <dbReference type="SAM" id="MobiDB-lite"/>
    </source>
</evidence>
<sequence length="1413" mass="156129">MKALLDLFKQVQQEEVFDAIKIGLASPDKIRSWSFGEVKKPETINYRTFKPERDGLFCAKIFGPIKDYECLCGKYKRLKHRGVICEKCGVEVTLAKVRRERMGHIELASPVAHIWFLKSLPSRLGMVLDMTLRDIERVLYFEAYVVIEPGMTPLKARQIMTEEDYYNKVEEYGDEFRAEMGAEGVRELLRAINIDEQVETLRTELKNTGSEAKIKKYAKRLKVLEAFQRSGIKPEWMILEVLPVLPPELRPLVPLDGGRFATSDLNDLYRRVINRNNRLKRLLELKAPEIIVRNEKRMLQEAVDSLLDNGRRGKAMTGANKRPLKSLADMIKGKGGRFRQNLLGKRVDYSGRSVIVVGPTLKLHQCGLPKLMALELFKPFIFNKLEVMGVATTIKAAKKEVENQTPVVWDILEEVIREHPVMLNRAPTLHRLGIQAFEPVLIEGKAIQLHPLVCAAFNADFDGDQMAVHVPLSLEAQMEARTLMLASNNVLFPANGDPSIVPSQDIVLGLYYATREAVNGKGEGLSFTGVSEVIRAYENKEVELASRVNVRITEMVHNEDKSEGAPPFVPKITLYATTVGRAILSEILPHGLPFSVLNKPLKKKEISRLINTAFRKCGLRATVVFADQLMQSGFRLATRAGISICVDDMLVPPQKETIVGDAAKKVKEYDRQYMSGLVTAQERYNNVVDIWSATSEAVGKAMMEQLSTEPVTDRDGNETRQESFNSIYMMADSGARGSAVQIRQLAGMRGLMAKPDGSIIETPITANFREGLNVLQYFISTHGARKGLADTALKTANSGYLTRRLVDVTQDLVVVEDDCGTSNGVAMKALVEGGEVVEALRDRILGRVAVADVVNPETQETLYESGTLLDETAVEEIERLGIDEVRVRTPLTCETRYGLCAACYGRDLGRGSLVNVGEAVGVIAAQSIGEPGTQLTMRTFHIGGAASRAAVASSVEAKSNGIVRFTATMRYVTNAKGEQIVISRSGEAMITDDFGRERERHKVPYGATLLQLDGATIKAGTQLATWDPLTRPIITEYGGTVKFENVEEGVTVAKQIDDVTGLSTLVVIDVKRRGSQASKSVRPQVKLLDANGEEVKIPGTEHAVQIGFQVGALITVKDGQQVQVGEVLARIPTEAQKTRDITGGLPRVAELFEARSPKDAGILAEVTGTTSFGKDTKGKQRLVITDLEGNQHEFLIAKEKQVLVHDAQVVNKGEMIVDGPADPHDILRLQGIEALSRYIVDEVQDVYRLQGVKINDKHIEVIVRQMLRRVQITDNGDTRFIPGEQVERSDMLDENDRMIAEGKRPASYDNVLLGITKASLSTDSFISAASFQETTRVLTEAAIMGKRDDLRGLKENVIVGRLIPAGTGLAFHKARKAKESSDRERFDQIAAEEAFDFGTPSAPAEEPQHPAAE</sequence>
<keyword id="KW-0240">DNA-directed RNA polymerase</keyword>
<keyword id="KW-0460">Magnesium</keyword>
<keyword id="KW-0479">Metal-binding</keyword>
<keyword id="KW-0548">Nucleotidyltransferase</keyword>
<keyword id="KW-0804">Transcription</keyword>
<keyword id="KW-0808">Transferase</keyword>
<keyword id="KW-0862">Zinc</keyword>
<comment type="function">
    <text evidence="1">DNA-dependent RNA polymerase catalyzes the transcription of DNA into RNA using the four ribonucleoside triphosphates as substrates.</text>
</comment>
<comment type="catalytic activity">
    <reaction evidence="1">
        <text>RNA(n) + a ribonucleoside 5'-triphosphate = RNA(n+1) + diphosphate</text>
        <dbReference type="Rhea" id="RHEA:21248"/>
        <dbReference type="Rhea" id="RHEA-COMP:14527"/>
        <dbReference type="Rhea" id="RHEA-COMP:17342"/>
        <dbReference type="ChEBI" id="CHEBI:33019"/>
        <dbReference type="ChEBI" id="CHEBI:61557"/>
        <dbReference type="ChEBI" id="CHEBI:140395"/>
        <dbReference type="EC" id="2.7.7.6"/>
    </reaction>
</comment>
<comment type="cofactor">
    <cofactor evidence="1">
        <name>Mg(2+)</name>
        <dbReference type="ChEBI" id="CHEBI:18420"/>
    </cofactor>
    <text evidence="1">Binds 1 Mg(2+) ion per subunit.</text>
</comment>
<comment type="cofactor">
    <cofactor evidence="1">
        <name>Zn(2+)</name>
        <dbReference type="ChEBI" id="CHEBI:29105"/>
    </cofactor>
    <text evidence="1">Binds 2 Zn(2+) ions per subunit.</text>
</comment>
<comment type="subunit">
    <text evidence="1">The RNAP catalytic core consists of 2 alpha, 1 beta, 1 beta' and 1 omega subunit. When a sigma factor is associated with the core the holoenzyme is formed, which can initiate transcription.</text>
</comment>
<comment type="similarity">
    <text evidence="1">Belongs to the RNA polymerase beta' chain family.</text>
</comment>
<dbReference type="EC" id="2.7.7.6" evidence="1"/>
<dbReference type="EMBL" id="CP000378">
    <property type="protein sequence ID" value="ABF77664.1"/>
    <property type="molecule type" value="Genomic_DNA"/>
</dbReference>
<dbReference type="SMR" id="Q1BRU1"/>
<dbReference type="HOGENOM" id="CLU_000524_3_1_4"/>
<dbReference type="GO" id="GO:0000428">
    <property type="term" value="C:DNA-directed RNA polymerase complex"/>
    <property type="evidence" value="ECO:0007669"/>
    <property type="project" value="UniProtKB-KW"/>
</dbReference>
<dbReference type="GO" id="GO:0003677">
    <property type="term" value="F:DNA binding"/>
    <property type="evidence" value="ECO:0007669"/>
    <property type="project" value="UniProtKB-UniRule"/>
</dbReference>
<dbReference type="GO" id="GO:0003899">
    <property type="term" value="F:DNA-directed RNA polymerase activity"/>
    <property type="evidence" value="ECO:0007669"/>
    <property type="project" value="UniProtKB-UniRule"/>
</dbReference>
<dbReference type="GO" id="GO:0000287">
    <property type="term" value="F:magnesium ion binding"/>
    <property type="evidence" value="ECO:0007669"/>
    <property type="project" value="UniProtKB-UniRule"/>
</dbReference>
<dbReference type="GO" id="GO:0008270">
    <property type="term" value="F:zinc ion binding"/>
    <property type="evidence" value="ECO:0007669"/>
    <property type="project" value="UniProtKB-UniRule"/>
</dbReference>
<dbReference type="GO" id="GO:0006351">
    <property type="term" value="P:DNA-templated transcription"/>
    <property type="evidence" value="ECO:0007669"/>
    <property type="project" value="UniProtKB-UniRule"/>
</dbReference>
<dbReference type="CDD" id="cd02655">
    <property type="entry name" value="RNAP_beta'_C"/>
    <property type="match status" value="1"/>
</dbReference>
<dbReference type="CDD" id="cd01609">
    <property type="entry name" value="RNAP_beta'_N"/>
    <property type="match status" value="1"/>
</dbReference>
<dbReference type="FunFam" id="1.10.132.30:FF:000003">
    <property type="entry name" value="DNA-directed RNA polymerase subunit beta"/>
    <property type="match status" value="1"/>
</dbReference>
<dbReference type="FunFam" id="1.10.150.390:FF:000002">
    <property type="entry name" value="DNA-directed RNA polymerase subunit beta"/>
    <property type="match status" value="1"/>
</dbReference>
<dbReference type="FunFam" id="4.10.860.120:FF:000001">
    <property type="entry name" value="DNA-directed RNA polymerase subunit beta"/>
    <property type="match status" value="1"/>
</dbReference>
<dbReference type="Gene3D" id="1.10.132.30">
    <property type="match status" value="1"/>
</dbReference>
<dbReference type="Gene3D" id="1.10.150.390">
    <property type="match status" value="1"/>
</dbReference>
<dbReference type="Gene3D" id="1.10.1790.20">
    <property type="match status" value="1"/>
</dbReference>
<dbReference type="Gene3D" id="1.10.40.90">
    <property type="match status" value="1"/>
</dbReference>
<dbReference type="Gene3D" id="2.40.40.20">
    <property type="match status" value="1"/>
</dbReference>
<dbReference type="Gene3D" id="2.40.50.100">
    <property type="match status" value="3"/>
</dbReference>
<dbReference type="Gene3D" id="4.10.860.120">
    <property type="entry name" value="RNA polymerase II, clamp domain"/>
    <property type="match status" value="1"/>
</dbReference>
<dbReference type="Gene3D" id="1.10.274.100">
    <property type="entry name" value="RNA polymerase Rpb1, domain 3"/>
    <property type="match status" value="1"/>
</dbReference>
<dbReference type="HAMAP" id="MF_01322">
    <property type="entry name" value="RNApol_bact_RpoC"/>
    <property type="match status" value="1"/>
</dbReference>
<dbReference type="InterPro" id="IPR045867">
    <property type="entry name" value="DNA-dir_RpoC_beta_prime"/>
</dbReference>
<dbReference type="InterPro" id="IPR012754">
    <property type="entry name" value="DNA-dir_RpoC_beta_prime_bact"/>
</dbReference>
<dbReference type="InterPro" id="IPR000722">
    <property type="entry name" value="RNA_pol_asu"/>
</dbReference>
<dbReference type="InterPro" id="IPR006592">
    <property type="entry name" value="RNA_pol_N"/>
</dbReference>
<dbReference type="InterPro" id="IPR007080">
    <property type="entry name" value="RNA_pol_Rpb1_1"/>
</dbReference>
<dbReference type="InterPro" id="IPR007066">
    <property type="entry name" value="RNA_pol_Rpb1_3"/>
</dbReference>
<dbReference type="InterPro" id="IPR042102">
    <property type="entry name" value="RNA_pol_Rpb1_3_sf"/>
</dbReference>
<dbReference type="InterPro" id="IPR007083">
    <property type="entry name" value="RNA_pol_Rpb1_4"/>
</dbReference>
<dbReference type="InterPro" id="IPR007081">
    <property type="entry name" value="RNA_pol_Rpb1_5"/>
</dbReference>
<dbReference type="InterPro" id="IPR044893">
    <property type="entry name" value="RNA_pol_Rpb1_clamp_domain"/>
</dbReference>
<dbReference type="InterPro" id="IPR038120">
    <property type="entry name" value="Rpb1_funnel_sf"/>
</dbReference>
<dbReference type="NCBIfam" id="TIGR02386">
    <property type="entry name" value="rpoC_TIGR"/>
    <property type="match status" value="1"/>
</dbReference>
<dbReference type="PANTHER" id="PTHR19376">
    <property type="entry name" value="DNA-DIRECTED RNA POLYMERASE"/>
    <property type="match status" value="1"/>
</dbReference>
<dbReference type="PANTHER" id="PTHR19376:SF54">
    <property type="entry name" value="DNA-DIRECTED RNA POLYMERASE SUBUNIT BETA"/>
    <property type="match status" value="1"/>
</dbReference>
<dbReference type="Pfam" id="PF04997">
    <property type="entry name" value="RNA_pol_Rpb1_1"/>
    <property type="match status" value="1"/>
</dbReference>
<dbReference type="Pfam" id="PF00623">
    <property type="entry name" value="RNA_pol_Rpb1_2"/>
    <property type="match status" value="2"/>
</dbReference>
<dbReference type="Pfam" id="PF04983">
    <property type="entry name" value="RNA_pol_Rpb1_3"/>
    <property type="match status" value="1"/>
</dbReference>
<dbReference type="Pfam" id="PF05000">
    <property type="entry name" value="RNA_pol_Rpb1_4"/>
    <property type="match status" value="1"/>
</dbReference>
<dbReference type="Pfam" id="PF04998">
    <property type="entry name" value="RNA_pol_Rpb1_5"/>
    <property type="match status" value="1"/>
</dbReference>
<dbReference type="SMART" id="SM00663">
    <property type="entry name" value="RPOLA_N"/>
    <property type="match status" value="1"/>
</dbReference>
<dbReference type="SUPFAM" id="SSF64484">
    <property type="entry name" value="beta and beta-prime subunits of DNA dependent RNA-polymerase"/>
    <property type="match status" value="1"/>
</dbReference>
<gene>
    <name evidence="1" type="primary">rpoC</name>
    <name type="ordered locus">Bcen_2766</name>
</gene>
<feature type="chain" id="PRO_0000353305" description="DNA-directed RNA polymerase subunit beta'">
    <location>
        <begin position="1"/>
        <end position="1413"/>
    </location>
</feature>
<feature type="region of interest" description="Disordered" evidence="2">
    <location>
        <begin position="1392"/>
        <end position="1413"/>
    </location>
</feature>
<feature type="binding site" evidence="1">
    <location>
        <position position="70"/>
    </location>
    <ligand>
        <name>Zn(2+)</name>
        <dbReference type="ChEBI" id="CHEBI:29105"/>
        <label>1</label>
    </ligand>
</feature>
<feature type="binding site" evidence="1">
    <location>
        <position position="72"/>
    </location>
    <ligand>
        <name>Zn(2+)</name>
        <dbReference type="ChEBI" id="CHEBI:29105"/>
        <label>1</label>
    </ligand>
</feature>
<feature type="binding site" evidence="1">
    <location>
        <position position="85"/>
    </location>
    <ligand>
        <name>Zn(2+)</name>
        <dbReference type="ChEBI" id="CHEBI:29105"/>
        <label>1</label>
    </ligand>
</feature>
<feature type="binding site" evidence="1">
    <location>
        <position position="88"/>
    </location>
    <ligand>
        <name>Zn(2+)</name>
        <dbReference type="ChEBI" id="CHEBI:29105"/>
        <label>1</label>
    </ligand>
</feature>
<feature type="binding site" evidence="1">
    <location>
        <position position="460"/>
    </location>
    <ligand>
        <name>Mg(2+)</name>
        <dbReference type="ChEBI" id="CHEBI:18420"/>
    </ligand>
</feature>
<feature type="binding site" evidence="1">
    <location>
        <position position="462"/>
    </location>
    <ligand>
        <name>Mg(2+)</name>
        <dbReference type="ChEBI" id="CHEBI:18420"/>
    </ligand>
</feature>
<feature type="binding site" evidence="1">
    <location>
        <position position="464"/>
    </location>
    <ligand>
        <name>Mg(2+)</name>
        <dbReference type="ChEBI" id="CHEBI:18420"/>
    </ligand>
</feature>
<feature type="binding site" evidence="1">
    <location>
        <position position="819"/>
    </location>
    <ligand>
        <name>Zn(2+)</name>
        <dbReference type="ChEBI" id="CHEBI:29105"/>
        <label>2</label>
    </ligand>
</feature>
<feature type="binding site" evidence="1">
    <location>
        <position position="893"/>
    </location>
    <ligand>
        <name>Zn(2+)</name>
        <dbReference type="ChEBI" id="CHEBI:29105"/>
        <label>2</label>
    </ligand>
</feature>
<feature type="binding site" evidence="1">
    <location>
        <position position="900"/>
    </location>
    <ligand>
        <name>Zn(2+)</name>
        <dbReference type="ChEBI" id="CHEBI:29105"/>
        <label>2</label>
    </ligand>
</feature>
<feature type="binding site" evidence="1">
    <location>
        <position position="903"/>
    </location>
    <ligand>
        <name>Zn(2+)</name>
        <dbReference type="ChEBI" id="CHEBI:29105"/>
        <label>2</label>
    </ligand>
</feature>
<name>RPOC_BURO1</name>
<protein>
    <recommendedName>
        <fullName evidence="1">DNA-directed RNA polymerase subunit beta'</fullName>
        <shortName evidence="1">RNAP subunit beta'</shortName>
        <ecNumber evidence="1">2.7.7.6</ecNumber>
    </recommendedName>
    <alternativeName>
        <fullName evidence="1">RNA polymerase subunit beta'</fullName>
    </alternativeName>
    <alternativeName>
        <fullName evidence="1">Transcriptase subunit beta'</fullName>
    </alternativeName>
</protein>
<accession>Q1BRU1</accession>
<organism>
    <name type="scientific">Burkholderia orbicola (strain AU 1054)</name>
    <dbReference type="NCBI Taxonomy" id="331271"/>
    <lineage>
        <taxon>Bacteria</taxon>
        <taxon>Pseudomonadati</taxon>
        <taxon>Pseudomonadota</taxon>
        <taxon>Betaproteobacteria</taxon>
        <taxon>Burkholderiales</taxon>
        <taxon>Burkholderiaceae</taxon>
        <taxon>Burkholderia</taxon>
        <taxon>Burkholderia cepacia complex</taxon>
        <taxon>Burkholderia orbicola</taxon>
    </lineage>
</organism>